<feature type="chain" id="PRO_1000068287" description="Peptide methionine sulfoxide reductase MsrB">
    <location>
        <begin position="1"/>
        <end position="131"/>
    </location>
</feature>
<feature type="domain" description="MsrB" evidence="2">
    <location>
        <begin position="8"/>
        <end position="130"/>
    </location>
</feature>
<feature type="active site" description="Nucleophile" evidence="2">
    <location>
        <position position="119"/>
    </location>
</feature>
<feature type="binding site" evidence="2">
    <location>
        <position position="47"/>
    </location>
    <ligand>
        <name>Zn(2+)</name>
        <dbReference type="ChEBI" id="CHEBI:29105"/>
    </ligand>
</feature>
<feature type="binding site" evidence="2">
    <location>
        <position position="50"/>
    </location>
    <ligand>
        <name>Zn(2+)</name>
        <dbReference type="ChEBI" id="CHEBI:29105"/>
    </ligand>
</feature>
<feature type="binding site" evidence="2">
    <location>
        <position position="96"/>
    </location>
    <ligand>
        <name>Zn(2+)</name>
        <dbReference type="ChEBI" id="CHEBI:29105"/>
    </ligand>
</feature>
<feature type="binding site" evidence="2">
    <location>
        <position position="99"/>
    </location>
    <ligand>
        <name>Zn(2+)</name>
        <dbReference type="ChEBI" id="CHEBI:29105"/>
    </ligand>
</feature>
<reference key="1">
    <citation type="submission" date="2007-05" db="EMBL/GenBank/DDBJ databases">
        <title>Complete sequence of Pseudomonas putida F1.</title>
        <authorList>
            <consortium name="US DOE Joint Genome Institute"/>
            <person name="Copeland A."/>
            <person name="Lucas S."/>
            <person name="Lapidus A."/>
            <person name="Barry K."/>
            <person name="Detter J.C."/>
            <person name="Glavina del Rio T."/>
            <person name="Hammon N."/>
            <person name="Israni S."/>
            <person name="Dalin E."/>
            <person name="Tice H."/>
            <person name="Pitluck S."/>
            <person name="Chain P."/>
            <person name="Malfatti S."/>
            <person name="Shin M."/>
            <person name="Vergez L."/>
            <person name="Schmutz J."/>
            <person name="Larimer F."/>
            <person name="Land M."/>
            <person name="Hauser L."/>
            <person name="Kyrpides N."/>
            <person name="Lykidis A."/>
            <person name="Parales R."/>
            <person name="Richardson P."/>
        </authorList>
    </citation>
    <scope>NUCLEOTIDE SEQUENCE [LARGE SCALE GENOMIC DNA]</scope>
    <source>
        <strain>ATCC 700007 / DSM 6899 / JCM 31910 / BCRC 17059 / LMG 24140 / F1</strain>
    </source>
</reference>
<name>MSRB_PSEP1</name>
<comment type="catalytic activity">
    <reaction evidence="1">
        <text>L-methionyl-[protein] + [thioredoxin]-disulfide + H2O = L-methionyl-(R)-S-oxide-[protein] + [thioredoxin]-dithiol</text>
        <dbReference type="Rhea" id="RHEA:24164"/>
        <dbReference type="Rhea" id="RHEA-COMP:10698"/>
        <dbReference type="Rhea" id="RHEA-COMP:10700"/>
        <dbReference type="Rhea" id="RHEA-COMP:12313"/>
        <dbReference type="Rhea" id="RHEA-COMP:12314"/>
        <dbReference type="ChEBI" id="CHEBI:15377"/>
        <dbReference type="ChEBI" id="CHEBI:16044"/>
        <dbReference type="ChEBI" id="CHEBI:29950"/>
        <dbReference type="ChEBI" id="CHEBI:45764"/>
        <dbReference type="ChEBI" id="CHEBI:50058"/>
        <dbReference type="EC" id="1.8.4.12"/>
    </reaction>
</comment>
<comment type="cofactor">
    <cofactor evidence="1">
        <name>Zn(2+)</name>
        <dbReference type="ChEBI" id="CHEBI:29105"/>
    </cofactor>
    <text evidence="1">Binds 1 zinc ion per subunit. The zinc ion is important for the structural integrity of the protein.</text>
</comment>
<comment type="similarity">
    <text evidence="1">Belongs to the MsrB Met sulfoxide reductase family.</text>
</comment>
<sequence length="131" mass="14922">MKKIEKTLDEWRSMLDPEQYQVCRLKGTERPFSGKYNSERRDGIYHCICCGLALFDAQTKFDAGCGWPSFYAPIEDSAMIEIRDTSHGMIRTEVTCARCDAHLGHVFPDGPPPTGLRYCINSVCIDLRPRD</sequence>
<protein>
    <recommendedName>
        <fullName evidence="1">Peptide methionine sulfoxide reductase MsrB</fullName>
        <ecNumber evidence="1">1.8.4.12</ecNumber>
    </recommendedName>
    <alternativeName>
        <fullName evidence="1">Peptide-methionine (R)-S-oxide reductase</fullName>
    </alternativeName>
</protein>
<proteinExistence type="inferred from homology"/>
<dbReference type="EC" id="1.8.4.12" evidence="1"/>
<dbReference type="EMBL" id="CP000712">
    <property type="protein sequence ID" value="ABQ79966.1"/>
    <property type="molecule type" value="Genomic_DNA"/>
</dbReference>
<dbReference type="SMR" id="A5W756"/>
<dbReference type="KEGG" id="ppf:Pput_3842"/>
<dbReference type="eggNOG" id="COG0229">
    <property type="taxonomic scope" value="Bacteria"/>
</dbReference>
<dbReference type="HOGENOM" id="CLU_031040_8_5_6"/>
<dbReference type="GO" id="GO:0005737">
    <property type="term" value="C:cytoplasm"/>
    <property type="evidence" value="ECO:0007669"/>
    <property type="project" value="TreeGrafter"/>
</dbReference>
<dbReference type="GO" id="GO:0033743">
    <property type="term" value="F:peptide-methionine (R)-S-oxide reductase activity"/>
    <property type="evidence" value="ECO:0007669"/>
    <property type="project" value="UniProtKB-UniRule"/>
</dbReference>
<dbReference type="GO" id="GO:0008270">
    <property type="term" value="F:zinc ion binding"/>
    <property type="evidence" value="ECO:0007669"/>
    <property type="project" value="UniProtKB-UniRule"/>
</dbReference>
<dbReference type="GO" id="GO:0030091">
    <property type="term" value="P:protein repair"/>
    <property type="evidence" value="ECO:0007669"/>
    <property type="project" value="InterPro"/>
</dbReference>
<dbReference type="GO" id="GO:0006979">
    <property type="term" value="P:response to oxidative stress"/>
    <property type="evidence" value="ECO:0007669"/>
    <property type="project" value="InterPro"/>
</dbReference>
<dbReference type="FunFam" id="2.170.150.20:FF:000001">
    <property type="entry name" value="Peptide methionine sulfoxide reductase MsrB"/>
    <property type="match status" value="1"/>
</dbReference>
<dbReference type="Gene3D" id="2.170.150.20">
    <property type="entry name" value="Peptide methionine sulfoxide reductase"/>
    <property type="match status" value="1"/>
</dbReference>
<dbReference type="HAMAP" id="MF_01400">
    <property type="entry name" value="MsrB"/>
    <property type="match status" value="1"/>
</dbReference>
<dbReference type="InterPro" id="IPR028427">
    <property type="entry name" value="Met_Sox_Rdtase_MsrB"/>
</dbReference>
<dbReference type="InterPro" id="IPR002579">
    <property type="entry name" value="Met_Sox_Rdtase_MsrB_dom"/>
</dbReference>
<dbReference type="InterPro" id="IPR011057">
    <property type="entry name" value="Mss4-like_sf"/>
</dbReference>
<dbReference type="NCBIfam" id="TIGR00357">
    <property type="entry name" value="peptide-methionine (R)-S-oxide reductase MsrB"/>
    <property type="match status" value="1"/>
</dbReference>
<dbReference type="PANTHER" id="PTHR10173">
    <property type="entry name" value="METHIONINE SULFOXIDE REDUCTASE"/>
    <property type="match status" value="1"/>
</dbReference>
<dbReference type="PANTHER" id="PTHR10173:SF52">
    <property type="entry name" value="METHIONINE-R-SULFOXIDE REDUCTASE B1"/>
    <property type="match status" value="1"/>
</dbReference>
<dbReference type="Pfam" id="PF01641">
    <property type="entry name" value="SelR"/>
    <property type="match status" value="1"/>
</dbReference>
<dbReference type="SUPFAM" id="SSF51316">
    <property type="entry name" value="Mss4-like"/>
    <property type="match status" value="1"/>
</dbReference>
<dbReference type="PROSITE" id="PS51790">
    <property type="entry name" value="MSRB"/>
    <property type="match status" value="1"/>
</dbReference>
<gene>
    <name evidence="1" type="primary">msrB</name>
    <name type="ordered locus">Pput_3842</name>
</gene>
<evidence type="ECO:0000255" key="1">
    <source>
        <dbReference type="HAMAP-Rule" id="MF_01400"/>
    </source>
</evidence>
<evidence type="ECO:0000255" key="2">
    <source>
        <dbReference type="PROSITE-ProRule" id="PRU01126"/>
    </source>
</evidence>
<keyword id="KW-0479">Metal-binding</keyword>
<keyword id="KW-0560">Oxidoreductase</keyword>
<keyword id="KW-0862">Zinc</keyword>
<accession>A5W756</accession>
<organism>
    <name type="scientific">Pseudomonas putida (strain ATCC 700007 / DSM 6899 / JCM 31910 / BCRC 17059 / LMG 24140 / F1)</name>
    <dbReference type="NCBI Taxonomy" id="351746"/>
    <lineage>
        <taxon>Bacteria</taxon>
        <taxon>Pseudomonadati</taxon>
        <taxon>Pseudomonadota</taxon>
        <taxon>Gammaproteobacteria</taxon>
        <taxon>Pseudomonadales</taxon>
        <taxon>Pseudomonadaceae</taxon>
        <taxon>Pseudomonas</taxon>
    </lineage>
</organism>